<protein>
    <recommendedName>
        <fullName evidence="1">Transcription elongation factor GreA</fullName>
    </recommendedName>
    <alternativeName>
        <fullName evidence="1">Transcript cleavage factor GreA</fullName>
    </alternativeName>
</protein>
<gene>
    <name evidence="1" type="primary">greA</name>
    <name type="ordered locus">OTBS_1246</name>
</gene>
<dbReference type="EMBL" id="AM494475">
    <property type="protein sequence ID" value="CAM80312.1"/>
    <property type="molecule type" value="Genomic_DNA"/>
</dbReference>
<dbReference type="RefSeq" id="WP_011944831.1">
    <property type="nucleotide sequence ID" value="NC_009488.1"/>
</dbReference>
<dbReference type="SMR" id="A5CE64"/>
<dbReference type="KEGG" id="ots:OTBS_1246"/>
<dbReference type="eggNOG" id="COG0782">
    <property type="taxonomic scope" value="Bacteria"/>
</dbReference>
<dbReference type="HOGENOM" id="CLU_101379_2_0_5"/>
<dbReference type="Proteomes" id="UP000001565">
    <property type="component" value="Chromosome"/>
</dbReference>
<dbReference type="GO" id="GO:0003677">
    <property type="term" value="F:DNA binding"/>
    <property type="evidence" value="ECO:0007669"/>
    <property type="project" value="UniProtKB-UniRule"/>
</dbReference>
<dbReference type="GO" id="GO:0070063">
    <property type="term" value="F:RNA polymerase binding"/>
    <property type="evidence" value="ECO:0007669"/>
    <property type="project" value="InterPro"/>
</dbReference>
<dbReference type="GO" id="GO:0006354">
    <property type="term" value="P:DNA-templated transcription elongation"/>
    <property type="evidence" value="ECO:0007669"/>
    <property type="project" value="TreeGrafter"/>
</dbReference>
<dbReference type="GO" id="GO:0032784">
    <property type="term" value="P:regulation of DNA-templated transcription elongation"/>
    <property type="evidence" value="ECO:0007669"/>
    <property type="project" value="UniProtKB-UniRule"/>
</dbReference>
<dbReference type="FunFam" id="1.10.287.180:FF:000001">
    <property type="entry name" value="Transcription elongation factor GreA"/>
    <property type="match status" value="1"/>
</dbReference>
<dbReference type="FunFam" id="3.10.50.30:FF:000001">
    <property type="entry name" value="Transcription elongation factor GreA"/>
    <property type="match status" value="1"/>
</dbReference>
<dbReference type="Gene3D" id="3.10.50.30">
    <property type="entry name" value="Transcription elongation factor, GreA/GreB, C-terminal domain"/>
    <property type="match status" value="1"/>
</dbReference>
<dbReference type="Gene3D" id="1.10.287.180">
    <property type="entry name" value="Transcription elongation factor, GreA/GreB, N-terminal domain"/>
    <property type="match status" value="1"/>
</dbReference>
<dbReference type="HAMAP" id="MF_00105">
    <property type="entry name" value="GreA_GreB"/>
    <property type="match status" value="1"/>
</dbReference>
<dbReference type="InterPro" id="IPR036953">
    <property type="entry name" value="GreA/GreB_C_sf"/>
</dbReference>
<dbReference type="InterPro" id="IPR018151">
    <property type="entry name" value="TF_GreA/GreB_CS"/>
</dbReference>
<dbReference type="InterPro" id="IPR006359">
    <property type="entry name" value="Tscrpt_elong_fac_GreA"/>
</dbReference>
<dbReference type="InterPro" id="IPR028624">
    <property type="entry name" value="Tscrpt_elong_fac_GreA/B"/>
</dbReference>
<dbReference type="InterPro" id="IPR001437">
    <property type="entry name" value="Tscrpt_elong_fac_GreA/B_C"/>
</dbReference>
<dbReference type="InterPro" id="IPR023459">
    <property type="entry name" value="Tscrpt_elong_fac_GreA/B_fam"/>
</dbReference>
<dbReference type="InterPro" id="IPR022691">
    <property type="entry name" value="Tscrpt_elong_fac_GreA/B_N"/>
</dbReference>
<dbReference type="InterPro" id="IPR036805">
    <property type="entry name" value="Tscrpt_elong_fac_GreA/B_N_sf"/>
</dbReference>
<dbReference type="NCBIfam" id="TIGR01462">
    <property type="entry name" value="greA"/>
    <property type="match status" value="1"/>
</dbReference>
<dbReference type="NCBIfam" id="NF001261">
    <property type="entry name" value="PRK00226.1-2"/>
    <property type="match status" value="1"/>
</dbReference>
<dbReference type="NCBIfam" id="NF001263">
    <property type="entry name" value="PRK00226.1-4"/>
    <property type="match status" value="1"/>
</dbReference>
<dbReference type="NCBIfam" id="NF001264">
    <property type="entry name" value="PRK00226.1-5"/>
    <property type="match status" value="1"/>
</dbReference>
<dbReference type="PANTHER" id="PTHR30437">
    <property type="entry name" value="TRANSCRIPTION ELONGATION FACTOR GREA"/>
    <property type="match status" value="1"/>
</dbReference>
<dbReference type="PANTHER" id="PTHR30437:SF4">
    <property type="entry name" value="TRANSCRIPTION ELONGATION FACTOR GREA"/>
    <property type="match status" value="1"/>
</dbReference>
<dbReference type="Pfam" id="PF01272">
    <property type="entry name" value="GreA_GreB"/>
    <property type="match status" value="1"/>
</dbReference>
<dbReference type="Pfam" id="PF03449">
    <property type="entry name" value="GreA_GreB_N"/>
    <property type="match status" value="1"/>
</dbReference>
<dbReference type="PIRSF" id="PIRSF006092">
    <property type="entry name" value="GreA_GreB"/>
    <property type="match status" value="1"/>
</dbReference>
<dbReference type="SUPFAM" id="SSF54534">
    <property type="entry name" value="FKBP-like"/>
    <property type="match status" value="1"/>
</dbReference>
<dbReference type="SUPFAM" id="SSF46557">
    <property type="entry name" value="GreA transcript cleavage protein, N-terminal domain"/>
    <property type="match status" value="1"/>
</dbReference>
<dbReference type="PROSITE" id="PS00829">
    <property type="entry name" value="GREAB_1"/>
    <property type="match status" value="1"/>
</dbReference>
<dbReference type="PROSITE" id="PS00830">
    <property type="entry name" value="GREAB_2"/>
    <property type="match status" value="1"/>
</dbReference>
<organism>
    <name type="scientific">Orientia tsutsugamushi (strain Boryong)</name>
    <name type="common">Rickettsia tsutsugamushi</name>
    <dbReference type="NCBI Taxonomy" id="357244"/>
    <lineage>
        <taxon>Bacteria</taxon>
        <taxon>Pseudomonadati</taxon>
        <taxon>Pseudomonadota</taxon>
        <taxon>Alphaproteobacteria</taxon>
        <taxon>Rickettsiales</taxon>
        <taxon>Rickettsiaceae</taxon>
        <taxon>Rickettsieae</taxon>
        <taxon>Orientia</taxon>
    </lineage>
</organism>
<accession>A5CE64</accession>
<evidence type="ECO:0000255" key="1">
    <source>
        <dbReference type="HAMAP-Rule" id="MF_00105"/>
    </source>
</evidence>
<name>GREA_ORITB</name>
<proteinExistence type="inferred from homology"/>
<reference key="1">
    <citation type="journal article" date="2007" name="Proc. Natl. Acad. Sci. U.S.A.">
        <title>The Orientia tsutsugamushi genome reveals massive proliferation of conjugative type IV secretion system and host-cell interaction genes.</title>
        <authorList>
            <person name="Cho N.-H."/>
            <person name="Kim H.-R."/>
            <person name="Lee J.-H."/>
            <person name="Kim S.-Y."/>
            <person name="Kim J."/>
            <person name="Cha S."/>
            <person name="Kim S.-Y."/>
            <person name="Darby A.C."/>
            <person name="Fuxelius H.-H."/>
            <person name="Yin J."/>
            <person name="Kim J.H."/>
            <person name="Kim J."/>
            <person name="Lee S.J."/>
            <person name="Koh Y.-S."/>
            <person name="Jang W.-J."/>
            <person name="Park K.-H."/>
            <person name="Andersson S.G.E."/>
            <person name="Choi M.-S."/>
            <person name="Kim I.-S."/>
        </authorList>
    </citation>
    <scope>NUCLEOTIDE SEQUENCE [LARGE SCALE GENOMIC DNA]</scope>
    <source>
        <strain>Boryong</strain>
    </source>
</reference>
<sequence>MARFPITIKGFHKLEQELKHLKYVERLKITTDISTAREFGDLSENAEYKAAKERQLLNDKKIYDLENKLANAEVIEITKINSNSVKFGARVVLLDLDTEKEVVYQIVGEYEADITQNLISIASPIAQALIGKKAGDIIEVITPKGGRFYELLKVQYVDF</sequence>
<keyword id="KW-0238">DNA-binding</keyword>
<keyword id="KW-1185">Reference proteome</keyword>
<keyword id="KW-0804">Transcription</keyword>
<keyword id="KW-0805">Transcription regulation</keyword>
<comment type="function">
    <text evidence="1">Necessary for efficient RNA polymerase transcription elongation past template-encoded arresting sites. The arresting sites in DNA have the property of trapping a certain fraction of elongating RNA polymerases that pass through, resulting in locked ternary complexes. Cleavage of the nascent transcript by cleavage factors such as GreA or GreB allows the resumption of elongation from the new 3'terminus. GreA releases sequences of 2 to 3 nucleotides.</text>
</comment>
<comment type="similarity">
    <text evidence="1">Belongs to the GreA/GreB family.</text>
</comment>
<feature type="chain" id="PRO_1000094181" description="Transcription elongation factor GreA">
    <location>
        <begin position="1"/>
        <end position="159"/>
    </location>
</feature>